<gene>
    <name evidence="1" type="primary">acpS</name>
    <name type="ordered locus">RPA2695</name>
</gene>
<keyword id="KW-0963">Cytoplasm</keyword>
<keyword id="KW-0275">Fatty acid biosynthesis</keyword>
<keyword id="KW-0276">Fatty acid metabolism</keyword>
<keyword id="KW-0444">Lipid biosynthesis</keyword>
<keyword id="KW-0443">Lipid metabolism</keyword>
<keyword id="KW-0460">Magnesium</keyword>
<keyword id="KW-0479">Metal-binding</keyword>
<keyword id="KW-0808">Transferase</keyword>
<comment type="function">
    <text evidence="1">Transfers the 4'-phosphopantetheine moiety from coenzyme A to a Ser of acyl-carrier-protein.</text>
</comment>
<comment type="catalytic activity">
    <reaction evidence="1">
        <text>apo-[ACP] + CoA = holo-[ACP] + adenosine 3',5'-bisphosphate + H(+)</text>
        <dbReference type="Rhea" id="RHEA:12068"/>
        <dbReference type="Rhea" id="RHEA-COMP:9685"/>
        <dbReference type="Rhea" id="RHEA-COMP:9690"/>
        <dbReference type="ChEBI" id="CHEBI:15378"/>
        <dbReference type="ChEBI" id="CHEBI:29999"/>
        <dbReference type="ChEBI" id="CHEBI:57287"/>
        <dbReference type="ChEBI" id="CHEBI:58343"/>
        <dbReference type="ChEBI" id="CHEBI:64479"/>
        <dbReference type="EC" id="2.7.8.7"/>
    </reaction>
</comment>
<comment type="cofactor">
    <cofactor evidence="1">
        <name>Mg(2+)</name>
        <dbReference type="ChEBI" id="CHEBI:18420"/>
    </cofactor>
</comment>
<comment type="subcellular location">
    <subcellularLocation>
        <location evidence="1">Cytoplasm</location>
    </subcellularLocation>
</comment>
<comment type="similarity">
    <text evidence="1">Belongs to the P-Pant transferase superfamily. AcpS family.</text>
</comment>
<accession>Q6N6C3</accession>
<dbReference type="EC" id="2.7.8.7" evidence="1"/>
<dbReference type="EMBL" id="BX572601">
    <property type="protein sequence ID" value="CAE28136.1"/>
    <property type="molecule type" value="Genomic_DNA"/>
</dbReference>
<dbReference type="RefSeq" id="WP_011158245.1">
    <property type="nucleotide sequence ID" value="NZ_CP116810.1"/>
</dbReference>
<dbReference type="SMR" id="Q6N6C3"/>
<dbReference type="STRING" id="258594.RPA2695"/>
<dbReference type="GeneID" id="66893770"/>
<dbReference type="eggNOG" id="COG0736">
    <property type="taxonomic scope" value="Bacteria"/>
</dbReference>
<dbReference type="HOGENOM" id="CLU_089696_0_2_5"/>
<dbReference type="PhylomeDB" id="Q6N6C3"/>
<dbReference type="GO" id="GO:0005737">
    <property type="term" value="C:cytoplasm"/>
    <property type="evidence" value="ECO:0007669"/>
    <property type="project" value="UniProtKB-SubCell"/>
</dbReference>
<dbReference type="GO" id="GO:0008897">
    <property type="term" value="F:holo-[acyl-carrier-protein] synthase activity"/>
    <property type="evidence" value="ECO:0007669"/>
    <property type="project" value="UniProtKB-UniRule"/>
</dbReference>
<dbReference type="GO" id="GO:0000287">
    <property type="term" value="F:magnesium ion binding"/>
    <property type="evidence" value="ECO:0007669"/>
    <property type="project" value="UniProtKB-UniRule"/>
</dbReference>
<dbReference type="GO" id="GO:0006633">
    <property type="term" value="P:fatty acid biosynthetic process"/>
    <property type="evidence" value="ECO:0007669"/>
    <property type="project" value="UniProtKB-UniRule"/>
</dbReference>
<dbReference type="Gene3D" id="3.90.470.20">
    <property type="entry name" value="4'-phosphopantetheinyl transferase domain"/>
    <property type="match status" value="1"/>
</dbReference>
<dbReference type="HAMAP" id="MF_00101">
    <property type="entry name" value="AcpS"/>
    <property type="match status" value="1"/>
</dbReference>
<dbReference type="InterPro" id="IPR008278">
    <property type="entry name" value="4-PPantetheinyl_Trfase_dom"/>
</dbReference>
<dbReference type="InterPro" id="IPR037143">
    <property type="entry name" value="4-PPantetheinyl_Trfase_dom_sf"/>
</dbReference>
<dbReference type="InterPro" id="IPR002582">
    <property type="entry name" value="ACPS"/>
</dbReference>
<dbReference type="InterPro" id="IPR004568">
    <property type="entry name" value="Ppantetheine-prot_Trfase_dom"/>
</dbReference>
<dbReference type="NCBIfam" id="TIGR00516">
    <property type="entry name" value="acpS"/>
    <property type="match status" value="1"/>
</dbReference>
<dbReference type="NCBIfam" id="TIGR00556">
    <property type="entry name" value="pantethn_trn"/>
    <property type="match status" value="1"/>
</dbReference>
<dbReference type="Pfam" id="PF01648">
    <property type="entry name" value="ACPS"/>
    <property type="match status" value="1"/>
</dbReference>
<dbReference type="SUPFAM" id="SSF56214">
    <property type="entry name" value="4'-phosphopantetheinyl transferase"/>
    <property type="match status" value="1"/>
</dbReference>
<feature type="chain" id="PRO_0000175691" description="Holo-[acyl-carrier-protein] synthase">
    <location>
        <begin position="1"/>
        <end position="146"/>
    </location>
</feature>
<feature type="binding site" evidence="1">
    <location>
        <position position="8"/>
    </location>
    <ligand>
        <name>Mg(2+)</name>
        <dbReference type="ChEBI" id="CHEBI:18420"/>
    </ligand>
</feature>
<feature type="binding site" evidence="1">
    <location>
        <position position="61"/>
    </location>
    <ligand>
        <name>Mg(2+)</name>
        <dbReference type="ChEBI" id="CHEBI:18420"/>
    </ligand>
</feature>
<reference key="1">
    <citation type="journal article" date="2004" name="Nat. Biotechnol.">
        <title>Complete genome sequence of the metabolically versatile photosynthetic bacterium Rhodopseudomonas palustris.</title>
        <authorList>
            <person name="Larimer F.W."/>
            <person name="Chain P."/>
            <person name="Hauser L."/>
            <person name="Lamerdin J.E."/>
            <person name="Malfatti S."/>
            <person name="Do L."/>
            <person name="Land M.L."/>
            <person name="Pelletier D.A."/>
            <person name="Beatty J.T."/>
            <person name="Lang A.S."/>
            <person name="Tabita F.R."/>
            <person name="Gibson J.L."/>
            <person name="Hanson T.E."/>
            <person name="Bobst C."/>
            <person name="Torres y Torres J.L."/>
            <person name="Peres C."/>
            <person name="Harrison F.H."/>
            <person name="Gibson J."/>
            <person name="Harwood C.S."/>
        </authorList>
    </citation>
    <scope>NUCLEOTIDE SEQUENCE [LARGE SCALE GENOMIC DNA]</scope>
    <source>
        <strain>ATCC BAA-98 / CGA009</strain>
    </source>
</reference>
<name>ACPS_RHOPA</name>
<proteinExistence type="inferred from homology"/>
<sequence length="146" mass="15786">MIIGIGSDLIDITRIAKVIERHGERFLDRVFTEAERAKAERRAKKSELVAATYAKRFAAKEACSKALGTGIRQGVWWRDMGVVNLPGGRPTMVLTGGAKTRLDALTPPGMTARIDLSITDEWPLAQAFVVISAIPAAAEQAVHTSS</sequence>
<evidence type="ECO:0000255" key="1">
    <source>
        <dbReference type="HAMAP-Rule" id="MF_00101"/>
    </source>
</evidence>
<protein>
    <recommendedName>
        <fullName evidence="1">Holo-[acyl-carrier-protein] synthase</fullName>
        <shortName evidence="1">Holo-ACP synthase</shortName>
        <ecNumber evidence="1">2.7.8.7</ecNumber>
    </recommendedName>
    <alternativeName>
        <fullName evidence="1">4'-phosphopantetheinyl transferase AcpS</fullName>
    </alternativeName>
</protein>
<organism>
    <name type="scientific">Rhodopseudomonas palustris (strain ATCC BAA-98 / CGA009)</name>
    <dbReference type="NCBI Taxonomy" id="258594"/>
    <lineage>
        <taxon>Bacteria</taxon>
        <taxon>Pseudomonadati</taxon>
        <taxon>Pseudomonadota</taxon>
        <taxon>Alphaproteobacteria</taxon>
        <taxon>Hyphomicrobiales</taxon>
        <taxon>Nitrobacteraceae</taxon>
        <taxon>Rhodopseudomonas</taxon>
    </lineage>
</organism>